<feature type="chain" id="PRO_1000083306" description="Replication restart protein PriB">
    <location>
        <begin position="1"/>
        <end position="106"/>
    </location>
</feature>
<feature type="domain" description="SSB" evidence="1">
    <location>
        <begin position="4"/>
        <end position="103"/>
    </location>
</feature>
<accession>Q66FA1</accession>
<sequence>MVTTNRLVLSGTVCKTPVRKVSPSGIPHCQFVLEHRSTQQEAGFSRQTWCRMPIVVSGQQSQALTHSITVGSQLTVEGFISCHQGRNGLNKLVLHAEQIEFIDSGD</sequence>
<evidence type="ECO:0000255" key="1">
    <source>
        <dbReference type="HAMAP-Rule" id="MF_00720"/>
    </source>
</evidence>
<dbReference type="EMBL" id="BX936398">
    <property type="protein sequence ID" value="CAH19679.1"/>
    <property type="molecule type" value="Genomic_DNA"/>
</dbReference>
<dbReference type="RefSeq" id="WP_002210154.1">
    <property type="nucleotide sequence ID" value="NZ_CP009712.1"/>
</dbReference>
<dbReference type="SMR" id="Q66FA1"/>
<dbReference type="GeneID" id="96663941"/>
<dbReference type="KEGG" id="yps:YPTB0439"/>
<dbReference type="Proteomes" id="UP000001011">
    <property type="component" value="Chromosome"/>
</dbReference>
<dbReference type="GO" id="GO:1990077">
    <property type="term" value="C:primosome complex"/>
    <property type="evidence" value="ECO:0007669"/>
    <property type="project" value="UniProtKB-KW"/>
</dbReference>
<dbReference type="GO" id="GO:0003697">
    <property type="term" value="F:single-stranded DNA binding"/>
    <property type="evidence" value="ECO:0007669"/>
    <property type="project" value="UniProtKB-UniRule"/>
</dbReference>
<dbReference type="GO" id="GO:0006269">
    <property type="term" value="P:DNA replication, synthesis of primer"/>
    <property type="evidence" value="ECO:0007669"/>
    <property type="project" value="UniProtKB-KW"/>
</dbReference>
<dbReference type="Gene3D" id="2.40.50.140">
    <property type="entry name" value="Nucleic acid-binding proteins"/>
    <property type="match status" value="1"/>
</dbReference>
<dbReference type="HAMAP" id="MF_00720">
    <property type="entry name" value="PriB"/>
    <property type="match status" value="1"/>
</dbReference>
<dbReference type="InterPro" id="IPR012340">
    <property type="entry name" value="NA-bd_OB-fold"/>
</dbReference>
<dbReference type="InterPro" id="IPR000424">
    <property type="entry name" value="Primosome_PriB/ssb"/>
</dbReference>
<dbReference type="InterPro" id="IPR023646">
    <property type="entry name" value="Prisomal_replication_PriB"/>
</dbReference>
<dbReference type="NCBIfam" id="TIGR04418">
    <property type="entry name" value="PriB_gamma"/>
    <property type="match status" value="1"/>
</dbReference>
<dbReference type="Pfam" id="PF22657">
    <property type="entry name" value="SSB_1"/>
    <property type="match status" value="1"/>
</dbReference>
<dbReference type="PIRSF" id="PIRSF003135">
    <property type="entry name" value="Primosomal_n"/>
    <property type="match status" value="1"/>
</dbReference>
<dbReference type="SUPFAM" id="SSF50249">
    <property type="entry name" value="Nucleic acid-binding proteins"/>
    <property type="match status" value="1"/>
</dbReference>
<dbReference type="PROSITE" id="PS50935">
    <property type="entry name" value="SSB"/>
    <property type="match status" value="1"/>
</dbReference>
<proteinExistence type="inferred from homology"/>
<organism>
    <name type="scientific">Yersinia pseudotuberculosis serotype I (strain IP32953)</name>
    <dbReference type="NCBI Taxonomy" id="273123"/>
    <lineage>
        <taxon>Bacteria</taxon>
        <taxon>Pseudomonadati</taxon>
        <taxon>Pseudomonadota</taxon>
        <taxon>Gammaproteobacteria</taxon>
        <taxon>Enterobacterales</taxon>
        <taxon>Yersiniaceae</taxon>
        <taxon>Yersinia</taxon>
    </lineage>
</organism>
<reference key="1">
    <citation type="journal article" date="2004" name="Proc. Natl. Acad. Sci. U.S.A.">
        <title>Insights into the evolution of Yersinia pestis through whole-genome comparison with Yersinia pseudotuberculosis.</title>
        <authorList>
            <person name="Chain P.S.G."/>
            <person name="Carniel E."/>
            <person name="Larimer F.W."/>
            <person name="Lamerdin J."/>
            <person name="Stoutland P.O."/>
            <person name="Regala W.M."/>
            <person name="Georgescu A.M."/>
            <person name="Vergez L.M."/>
            <person name="Land M.L."/>
            <person name="Motin V.L."/>
            <person name="Brubaker R.R."/>
            <person name="Fowler J."/>
            <person name="Hinnebusch J."/>
            <person name="Marceau M."/>
            <person name="Medigue C."/>
            <person name="Simonet M."/>
            <person name="Chenal-Francisque V."/>
            <person name="Souza B."/>
            <person name="Dacheux D."/>
            <person name="Elliott J.M."/>
            <person name="Derbise A."/>
            <person name="Hauser L.J."/>
            <person name="Garcia E."/>
        </authorList>
    </citation>
    <scope>NUCLEOTIDE SEQUENCE [LARGE SCALE GENOMIC DNA]</scope>
    <source>
        <strain>IP32953</strain>
    </source>
</reference>
<name>PRIB_YERPS</name>
<gene>
    <name evidence="1" type="primary">priB</name>
    <name type="ordered locus">YPTB0439</name>
</gene>
<keyword id="KW-0235">DNA replication</keyword>
<keyword id="KW-0238">DNA-binding</keyword>
<keyword id="KW-0639">Primosome</keyword>
<protein>
    <recommendedName>
        <fullName evidence="1">Replication restart protein PriB</fullName>
    </recommendedName>
</protein>
<comment type="function">
    <text evidence="1">Involved in the restart of stalled replication forks, which reloads the replicative helicase on sites other than the origin of replication; the PriA-PriB pathway is the major replication restart pathway. During primosome assembly it facilitates complex formation between PriA and DnaT on DNA; stabilizes PriA on DNA. Stimulates the DNA unwinding activity of PriA helicase.</text>
</comment>
<comment type="subunit">
    <text evidence="1">Homodimer. Interacts with PriA and DnaT. Component of the replication restart primosome. Primosome assembly occurs via a 'hand-off' mechanism. PriA binds to replication forks, subsequently PriB then DnaT bind; DnaT then displaces ssDNA to generate the helicase loading substrate.</text>
</comment>
<comment type="similarity">
    <text evidence="1">Belongs to the PriB family.</text>
</comment>